<proteinExistence type="inferred from homology"/>
<reference key="1">
    <citation type="journal article" date="2000" name="J. Virol.">
        <title>Avian nephritis virus (ANV) as a new member of the family Astroviridae and construction of infectious ANV cDNA.</title>
        <authorList>
            <person name="Imada T."/>
            <person name="Yamaguchi S."/>
            <person name="Mase M."/>
            <person name="Tsukamoto K."/>
            <person name="Kubo M."/>
            <person name="Morooka A."/>
        </authorList>
    </citation>
    <scope>NUCLEOTIDE SEQUENCE [GENOMIC RNA]</scope>
    <source>
        <strain>G-4260</strain>
    </source>
</reference>
<name>NS1A_ANV1</name>
<organism>
    <name type="scientific">Avian nephritis virus 1</name>
    <name type="common">ANV-1</name>
    <dbReference type="NCBI Taxonomy" id="336960"/>
    <lineage>
        <taxon>Viruses</taxon>
        <taxon>Riboviria</taxon>
        <taxon>Orthornavirae</taxon>
        <taxon>Pisuviricota</taxon>
        <taxon>Stelpaviricetes</taxon>
        <taxon>Stellavirales</taxon>
        <taxon>Astroviridae</taxon>
        <taxon>Avastrovirus</taxon>
        <taxon>Avastrovirus 2</taxon>
    </lineage>
</organism>
<evidence type="ECO:0000250" key="1"/>
<evidence type="ECO:0000250" key="2">
    <source>
        <dbReference type="UniProtKB" id="P0C6K4"/>
    </source>
</evidence>
<evidence type="ECO:0000250" key="3">
    <source>
        <dbReference type="UniProtKB" id="Q3ZN07"/>
    </source>
</evidence>
<evidence type="ECO:0000255" key="4"/>
<evidence type="ECO:0000256" key="5">
    <source>
        <dbReference type="SAM" id="MobiDB-lite"/>
    </source>
</evidence>
<evidence type="ECO:0000305" key="6"/>
<organismHost>
    <name type="scientific">Gallus gallus</name>
    <name type="common">Chicken</name>
    <dbReference type="NCBI Taxonomy" id="9031"/>
</organismHost>
<organismHost>
    <name type="scientific">Meleagris gallopavo</name>
    <name type="common">Wild turkey</name>
    <dbReference type="NCBI Taxonomy" id="9103"/>
</organismHost>
<dbReference type="EC" id="3.4.21.-" evidence="2"/>
<dbReference type="EMBL" id="AB033998">
    <property type="status" value="NOT_ANNOTATED_CDS"/>
    <property type="molecule type" value="Genomic_RNA"/>
</dbReference>
<dbReference type="SMR" id="P0C6K7"/>
<dbReference type="Proteomes" id="UP000007440">
    <property type="component" value="Segment"/>
</dbReference>
<dbReference type="GO" id="GO:0033644">
    <property type="term" value="C:host cell membrane"/>
    <property type="evidence" value="ECO:0007669"/>
    <property type="project" value="UniProtKB-SubCell"/>
</dbReference>
<dbReference type="GO" id="GO:0016020">
    <property type="term" value="C:membrane"/>
    <property type="evidence" value="ECO:0007669"/>
    <property type="project" value="UniProtKB-KW"/>
</dbReference>
<dbReference type="GO" id="GO:0034062">
    <property type="term" value="F:5'-3' RNA polymerase activity"/>
    <property type="evidence" value="ECO:0007669"/>
    <property type="project" value="RHEA"/>
</dbReference>
<dbReference type="GO" id="GO:0008236">
    <property type="term" value="F:serine-type peptidase activity"/>
    <property type="evidence" value="ECO:0007669"/>
    <property type="project" value="UniProtKB-KW"/>
</dbReference>
<dbReference type="GO" id="GO:0006508">
    <property type="term" value="P:proteolysis"/>
    <property type="evidence" value="ECO:0007669"/>
    <property type="project" value="UniProtKB-KW"/>
</dbReference>
<dbReference type="GO" id="GO:0075523">
    <property type="term" value="P:viral translational frameshifting"/>
    <property type="evidence" value="ECO:0007669"/>
    <property type="project" value="UniProtKB-KW"/>
</dbReference>
<dbReference type="Gene3D" id="2.40.10.10">
    <property type="entry name" value="Trypsin-like serine proteases"/>
    <property type="match status" value="2"/>
</dbReference>
<dbReference type="InterPro" id="IPR045836">
    <property type="entry name" value="Astro_VPg"/>
</dbReference>
<dbReference type="InterPro" id="IPR009003">
    <property type="entry name" value="Peptidase_S1_PA"/>
</dbReference>
<dbReference type="InterPro" id="IPR043504">
    <property type="entry name" value="Peptidase_S1_PA_chymotrypsin"/>
</dbReference>
<dbReference type="Pfam" id="PF19416">
    <property type="entry name" value="Astro_VPg"/>
    <property type="match status" value="1"/>
</dbReference>
<dbReference type="SUPFAM" id="SSF50494">
    <property type="entry name" value="Trypsin-like serine proteases"/>
    <property type="match status" value="1"/>
</dbReference>
<keyword id="KW-0191">Covalent protein-RNA linkage</keyword>
<keyword id="KW-1043">Host membrane</keyword>
<keyword id="KW-0378">Hydrolase</keyword>
<keyword id="KW-0472">Membrane</keyword>
<keyword id="KW-0597">Phosphoprotein</keyword>
<keyword id="KW-0645">Protease</keyword>
<keyword id="KW-0688">Ribosomal frameshifting</keyword>
<keyword id="KW-0720">Serine protease</keyword>
<keyword id="KW-0812">Transmembrane</keyword>
<keyword id="KW-1133">Transmembrane helix</keyword>
<keyword id="KW-0693">Viral RNA replication</keyword>
<comment type="function">
    <molecule>Serine protease p27</molecule>
    <text evidence="2">Responsible for the cleavage of the polyprotein into functional products.</text>
</comment>
<comment type="function">
    <molecule>Viral genome-linked protein</molecule>
    <text evidence="3">Protein covalently attached to the 5' extremity of the genomic and subgenomic RNAs (By similarity). It may serve as a primer for the replicase (By similarity).</text>
</comment>
<comment type="catalytic activity">
    <reaction>
        <text>RNA(n) + a ribonucleoside 5'-triphosphate = RNA(n+1) + diphosphate</text>
        <dbReference type="Rhea" id="RHEA:21248"/>
        <dbReference type="Rhea" id="RHEA-COMP:14527"/>
        <dbReference type="Rhea" id="RHEA-COMP:17342"/>
        <dbReference type="ChEBI" id="CHEBI:33019"/>
        <dbReference type="ChEBI" id="CHEBI:61557"/>
        <dbReference type="ChEBI" id="CHEBI:140395"/>
    </reaction>
</comment>
<comment type="subunit">
    <molecule>Serine protease p27</molecule>
    <text evidence="2">Monomer.</text>
</comment>
<comment type="subcellular location">
    <molecule>Transmembrane protein 1A</molecule>
    <subcellularLocation>
        <location evidence="6">Host membrane</location>
        <topology evidence="6">Multi-pass membrane protein</topology>
    </subcellularLocation>
</comment>
<comment type="alternative products">
    <event type="ribosomal frameshifting"/>
    <isoform>
        <id>P0C6K7-1</id>
        <name>nsp1a</name>
        <sequence type="displayed"/>
    </isoform>
    <isoform>
        <id>Q9JGF2-1</id>
        <name>nsp1ab</name>
        <sequence type="external"/>
    </isoform>
</comment>
<comment type="PTM">
    <text evidence="2">Cleaved by the viral and host proteases (By similarity). The protease is probably autocatalytically cleaved (By similarity).</text>
</comment>
<comment type="similarity">
    <text evidence="6">Belongs to the astroviridae polyprotein 1A family.</text>
</comment>
<accession>P0C6K7</accession>
<feature type="chain" id="PRO_0000327365" description="Non-structural polyprotein 1A">
    <location>
        <begin position="1"/>
        <end position="1005"/>
    </location>
</feature>
<feature type="chain" id="PRO_0000327366" description="Protein p19" evidence="4">
    <location>
        <begin position="1"/>
        <end position="204"/>
    </location>
</feature>
<feature type="chain" id="PRO_0000327367" description="Transmembrane protein 1A" evidence="4">
    <location>
        <begin position="205"/>
        <end position="478"/>
    </location>
</feature>
<feature type="chain" id="PRO_0000327368" description="Serine protease p27" evidence="4">
    <location>
        <begin position="479"/>
        <end position="730"/>
    </location>
</feature>
<feature type="chain" id="PRO_0000419603" description="Viral genome-linked protein" evidence="4">
    <location>
        <begin position="718"/>
        <end position="809"/>
    </location>
</feature>
<feature type="chain" id="PRO_0000327369" description="Protein p20'" evidence="4">
    <location>
        <begin position="810"/>
        <end position="1005"/>
    </location>
</feature>
<feature type="transmembrane region" description="Helical" evidence="4">
    <location>
        <begin position="239"/>
        <end position="259"/>
    </location>
</feature>
<feature type="transmembrane region" description="Helical" evidence="4">
    <location>
        <begin position="286"/>
        <end position="306"/>
    </location>
</feature>
<feature type="transmembrane region" description="Helical" evidence="4">
    <location>
        <begin position="313"/>
        <end position="333"/>
    </location>
</feature>
<feature type="transmembrane region" description="Helical" evidence="4">
    <location>
        <begin position="344"/>
        <end position="364"/>
    </location>
</feature>
<feature type="region of interest" description="Disordered" evidence="5">
    <location>
        <begin position="940"/>
        <end position="984"/>
    </location>
</feature>
<feature type="compositionally biased region" description="Low complexity" evidence="5">
    <location>
        <begin position="941"/>
        <end position="961"/>
    </location>
</feature>
<feature type="active site" description="Charge relay system; for serine protease activity" evidence="1">
    <location>
        <position position="524"/>
    </location>
</feature>
<feature type="active site" description="Charge relay system; for serine protease activity" evidence="1">
    <location>
        <position position="556"/>
    </location>
</feature>
<feature type="active site" description="Charge relay system; for serine protease activity" evidence="1">
    <location>
        <position position="621"/>
    </location>
</feature>
<feature type="site" description="Cleavage" evidence="4">
    <location>
        <begin position="204"/>
        <end position="205"/>
    </location>
</feature>
<feature type="site" description="Cleavage" evidence="4">
    <location>
        <begin position="478"/>
        <end position="479"/>
    </location>
</feature>
<feature type="site" description="Cleavage" evidence="2">
    <location>
        <begin position="717"/>
        <end position="718"/>
    </location>
</feature>
<feature type="site" description="Cleavage" evidence="4">
    <location>
        <begin position="730"/>
        <end position="731"/>
    </location>
</feature>
<feature type="site" description="Cleavage" evidence="4">
    <location>
        <begin position="809"/>
        <end position="810"/>
    </location>
</feature>
<feature type="modified residue" description="O-(5'-phospho-RNA)-tyrosine" evidence="3">
    <location>
        <position position="753"/>
    </location>
</feature>
<sequence>MASAGPTGAGARPPKAFTAQAGLAKLVNPAGLNSILARGKEKFGGTQAWKELMGCDVIFARSISHWYGIKGTTYYELTVALGQPLYKPVTDPELTEEEKAVMTAVQSRFAQSNSSVVLTRTLLNKTCELKDRIRELTDELGQTEVHLAREKVKAAALKLENRKLFVENQELKDQLEKERTKHGWKGLKTLCLWIFLATLIGGYITGSNAACTLVDVPSPMKVGYDTFKQMCIHKDSYLPDGAFDKESLALECSKQMDYMDCKEVITDSISGKTSFAGMLRDVFRVDEIVTAIRTVVRFAMDFSLAYPICVMFVLILTRNKKHAIISACCALVAKCCGLRLLPFTLVLTYAPSETAIAGCIYGLGYISIPLVTFLHWVGLVLKAILVPDDCYIGTRVSHALAWSIMLPMWIITQELMAFTEFPLELQIVTTVVVCTAGFGFRYLTGTVTITEPDGTVKKYKRIFNAKSAIGTISTVFFEKAKAIRGVIPSFPSKADNIVKIEVDVDGGSAGVGFRLGNYIYTAGHVVGEAKIAKITWKGLTSQAKVLGHIELPLFTDTLARLEIPKPFQQLPVFRLAKSSENDYVQMVCFDNQLQNVVTFSGWANIDGDYLNAPFETYAGTSGSPIINRDGRMLGVHFGSNAVVSQGFVITRLFATEPAVKQCKSDEDLADEIVRKVMGGIRISFASLTSELEKQRDELNALKQMVNDLIDTDLVALEKKKGKTKRTVRGQKHKTKAISKAAFMKTKVLTEEEYRRLEEEGFTKDEIKDIVDNLREQAWLDYQNQLDEEGDDDWYEQMEEDQRINDQIDQNIERDLEDRGEWYGQRKITFKQRAMLRFIQLGRQQQVATVSFPDGYEDRAEELYNKVVTTEDLPEGETSEAALSLPNKIVHQAGKRLNFKHVKIHPDKTFMKSGVTQIEEKPEGDIILKAKTTTLAPKEEPVIQQVEQQPQVEQQQQPQQPVVEEKKRTPPPKPQRKPKTGAKAKCLDCGETFVERQDFHVCKSKN</sequence>
<protein>
    <recommendedName>
        <fullName>Non-structural polyprotein 1A</fullName>
    </recommendedName>
    <component>
        <recommendedName>
            <fullName>Protein p19</fullName>
        </recommendedName>
    </component>
    <component>
        <recommendedName>
            <fullName>Transmembrane protein 1A</fullName>
        </recommendedName>
    </component>
    <component>
        <recommendedName>
            <fullName>Serine protease p27</fullName>
            <shortName>p27</shortName>
            <ecNumber evidence="2">3.4.21.-</ecNumber>
        </recommendedName>
    </component>
    <component>
        <recommendedName>
            <fullName>Viral genome-linked protein</fullName>
        </recommendedName>
        <alternativeName>
            <fullName>VPg</fullName>
        </alternativeName>
    </component>
    <component>
        <recommendedName>
            <fullName>Protein p20'</fullName>
        </recommendedName>
    </component>
</protein>
<gene>
    <name type="primary">ORF1</name>
</gene>